<comment type="function">
    <text evidence="2 3 8 11">Beta subunit of voltage-dependent calcium channels which contributes to the function of the calcium channel by increasing peak calcium current (By similarity). Plays a role in shifting voltage dependencies of activation and inactivation of the channel (By similarity). May modulate G protein inhibition (By similarity). May contribute to beta-adrenergic augmentation of Ca(2+) influx in cardiomyocytes, thereby regulating increases in heart rate and contractile force (PubMed:36424916). Involved in membrane targeting of the alpha-1 subunit CACNA1C (PubMed:17525370).</text>
</comment>
<comment type="subunit">
    <text evidence="3 8 9 10 11">Component of a calcium channel complex consisting of a pore-forming alpha subunit (CACNA1S) and the ancillary subunits CACNB1 or CACNB2, CACNG1 and CACNA2D1 (By similarity). The channel complex contains alpha, beta, gamma and delta subunits in a 1:1:1:1 ratio, i.e. it contains either CACNB1 or CACNB2 (By similarity). Interacts with CACNA1C (By similarity). Interacts with RRAD; interaction may be involved in beta-adrenergic regulation of heart rate and contractile force (PubMed:17525370, PubMed:36424916). Interaction with RRAD regulates the trafficking of CACNA1C to the cell membrane (PubMed:17525370). Interacts with TMIGD2 (PubMed:22419821). Interacts with CAMK2D (By similarity). Interacts with CBARP (By similarity). Interacts with CAMK2A (PubMed:28130356).</text>
</comment>
<comment type="interaction">
    <interactant intactId="EBI-2874501">
        <id>Q08289</id>
    </interactant>
    <interactant intactId="EBI-10171902">
        <id>P56545-3</id>
        <label>CTBP2</label>
    </interactant>
    <organismsDiffer>false</organismsDiffer>
    <experiments>5</experiments>
</comment>
<comment type="interaction">
    <interactant intactId="EBI-2874501">
        <id>Q08289</id>
    </interactant>
    <interactant intactId="EBI-5460660">
        <id>Q96MH2</id>
        <label>HEXIM2</label>
    </interactant>
    <organismsDiffer>false</organismsDiffer>
    <experiments>3</experiments>
</comment>
<comment type="interaction">
    <interactant intactId="EBI-2874501">
        <id>Q08289</id>
    </interactant>
    <interactant intactId="EBI-351098">
        <id>O14744</id>
        <label>PRMT5</label>
    </interactant>
    <organismsDiffer>false</organismsDiffer>
    <experiments>3</experiments>
</comment>
<comment type="interaction">
    <interactant intactId="EBI-2874501">
        <id>Q08289</id>
    </interactant>
    <interactant intactId="EBI-10276729">
        <id>Q8WUU8</id>
        <label>TMEM174</label>
    </interactant>
    <organismsDiffer>false</organismsDiffer>
    <experiments>3</experiments>
</comment>
<comment type="interaction">
    <interactant intactId="EBI-15707999">
        <id>Q08289-1</id>
    </interactant>
    <interactant intactId="EBI-1038838">
        <id>Q13936</id>
        <label>CACNA1C</label>
    </interactant>
    <organismsDiffer>false</organismsDiffer>
    <experiments>4</experiments>
</comment>
<comment type="subcellular location">
    <subcellularLocation>
        <location evidence="1">Cell membrane</location>
        <location evidence="1">Sarcolemma</location>
        <topology evidence="1">Peripheral membrane protein</topology>
        <orientation evidence="1">Cytoplasmic side</orientation>
    </subcellularLocation>
</comment>
<comment type="alternative products">
    <event type="alternative splicing"/>
    <isoform>
        <id>Q08289-1</id>
        <name>2d</name>
        <name>CACNB2d</name>
        <sequence type="displayed"/>
    </isoform>
    <isoform>
        <id>Q08289-2</id>
        <name>2a</name>
        <name>CACNB2a</name>
        <sequence type="described" ref="VSP_000627"/>
    </isoform>
    <isoform>
        <id>Q08289-3</id>
        <name>2b</name>
        <name>CACNB2b</name>
        <name>2aN4</name>
        <sequence type="described" ref="VSP_000628"/>
    </isoform>
    <isoform>
        <id>Q08289-4</id>
        <name>2c</name>
        <name>CACNB2c</name>
        <name>2aN2</name>
        <sequence type="described" ref="VSP_000626"/>
    </isoform>
    <isoform>
        <id>Q08289-5</id>
        <name>2e</name>
        <name>CACNB2e</name>
        <sequence type="described" ref="VSP_000629"/>
    </isoform>
    <isoform>
        <id>Q08289-6</id>
        <name>2f</name>
        <sequence type="described" ref="VSP_000627 VSP_000630"/>
    </isoform>
    <isoform>
        <id>Q08289-7</id>
        <name>2g</name>
        <sequence type="described" ref="VSP_000630"/>
    </isoform>
    <isoform>
        <id>Q08289-8</id>
        <name>2h</name>
        <name>2cN1</name>
        <sequence type="described" ref="VSP_000631"/>
    </isoform>
    <isoform>
        <id>Q08289-9</id>
        <name>2cN2</name>
        <sequence type="described" ref="VSP_000626 VSP_000631"/>
    </isoform>
    <isoform>
        <id>Q08289-10</id>
        <name>2cN4</name>
        <sequence type="described" ref="VSP_000628 VSP_000631"/>
    </isoform>
</comment>
<comment type="tissue specificity">
    <text>Expressed in all tissues.</text>
</comment>
<comment type="PTM">
    <text evidence="1">Regulated through phosphorylation at Thr-554 by CaMK2D.</text>
</comment>
<comment type="disease" evidence="7">
    <disease id="DI-00205">
        <name>Brugada syndrome 4</name>
        <acronym>BRGDA4</acronym>
        <description>A heart disease characterized by the association of Brugada syndrome with shortened QT intervals. Brugada syndrome is a tachyarrhythmia characterized by right bundle branch block and ST segment elevation on an electrocardiogram (ECG). It can cause the ventricles to beat so fast that the blood is prevented from circulating efficiently in the body. When this situation occurs, the individual will faint and may die in a few minutes if the heart is not reset.</description>
        <dbReference type="MIM" id="611876"/>
    </disease>
    <text>The gene represented in this entry may be involved in disease pathogenesis.</text>
</comment>
<comment type="similarity">
    <text evidence="18">Belongs to the calcium channel beta subunit family.</text>
</comment>
<comment type="sequence caution" evidence="18">
    <conflict type="frameshift">
        <sequence resource="EMBL-CDS" id="AAB51370"/>
    </conflict>
</comment>
<feature type="chain" id="PRO_0000144051" description="Voltage-dependent L-type calcium channel subunit beta-2">
    <location>
        <begin position="1"/>
        <end position="660"/>
    </location>
</feature>
<feature type="domain" description="SH3" evidence="4">
    <location>
        <begin position="114"/>
        <end position="183"/>
    </location>
</feature>
<feature type="region of interest" description="Disordered" evidence="5">
    <location>
        <begin position="39"/>
        <end position="101"/>
    </location>
</feature>
<feature type="region of interest" description="Disordered" evidence="5">
    <location>
        <begin position="190"/>
        <end position="261"/>
    </location>
</feature>
<feature type="region of interest" description="Disordered" evidence="5">
    <location>
        <begin position="486"/>
        <end position="641"/>
    </location>
</feature>
<feature type="compositionally biased region" description="Low complexity" evidence="5">
    <location>
        <begin position="55"/>
        <end position="65"/>
    </location>
</feature>
<feature type="compositionally biased region" description="Polar residues" evidence="5">
    <location>
        <begin position="66"/>
        <end position="85"/>
    </location>
</feature>
<feature type="compositionally biased region" description="Low complexity" evidence="5">
    <location>
        <begin position="197"/>
        <end position="209"/>
    </location>
</feature>
<feature type="compositionally biased region" description="Low complexity" evidence="5">
    <location>
        <begin position="486"/>
        <end position="495"/>
    </location>
</feature>
<feature type="compositionally biased region" description="Basic and acidic residues" evidence="5">
    <location>
        <begin position="560"/>
        <end position="602"/>
    </location>
</feature>
<feature type="compositionally biased region" description="Basic and acidic residues" evidence="5">
    <location>
        <begin position="610"/>
        <end position="623"/>
    </location>
</feature>
<feature type="compositionally biased region" description="Basic and acidic residues" evidence="5">
    <location>
        <begin position="632"/>
        <end position="641"/>
    </location>
</feature>
<feature type="site" description="Required for CaMK2D-binding" evidence="1">
    <location>
        <position position="549"/>
    </location>
</feature>
<feature type="modified residue" description="Phosphoserine" evidence="3">
    <location>
        <position position="204"/>
    </location>
</feature>
<feature type="modified residue" description="Phosphoserine" evidence="2">
    <location>
        <position position="207"/>
    </location>
</feature>
<feature type="modified residue" description="Phosphoserine" evidence="2">
    <location>
        <position position="218"/>
    </location>
</feature>
<feature type="modified residue" description="Phosphoserine" evidence="2">
    <location>
        <position position="550"/>
    </location>
</feature>
<feature type="modified residue" description="Phosphothreonine; by CaMK2D" evidence="3">
    <location>
        <position position="554"/>
    </location>
</feature>
<feature type="splice variant" id="VSP_000627" description="In isoform 2a and isoform 2f." evidence="12 14 15 16 17">
    <original>MVQRDMSKSPPTAAAAVAQEIQMELLENVAPAGALGAAAQSYGKGARRKNRFKGSDGSTSSDTTSNSFVRQ</original>
    <variation>MQCCGLVHRRRVRVSY</variation>
    <location>
        <begin position="1"/>
        <end position="71"/>
    </location>
</feature>
<feature type="splice variant" id="VSP_000628" description="In isoform 2b and isoform 2cN4." evidence="12 13">
    <original>MVQRDMSKSPPTAAAAVAQEIQMELLENVAPAGALGAAAQSYGKGARRKNRFKGSDGSTSSDTTSNSFVRQ</original>
    <variation>MLDRRLIAPQTKYIIPG</variation>
    <location>
        <begin position="1"/>
        <end position="71"/>
    </location>
</feature>
<feature type="splice variant" id="VSP_000629" description="In isoform 2e." evidence="12">
    <original>MVQRDMSKSPPTAAAAVAQEIQMELLENVAPAGALGAAAQSYGKGARRKNRFKGSDGSTSSDTTSNSFVRQ</original>
    <variation>MKATWIRLLKRAKGGRLKNSDIC</variation>
    <location>
        <begin position="1"/>
        <end position="71"/>
    </location>
</feature>
<feature type="splice variant" id="VSP_000626" description="In isoform 2c and isoform 2cN2." evidence="12 13">
    <original>MVQRDMSKSPPTAAAAVAQEIQMELLENVAPAGALGAAAQ</original>
    <variation>MNQGSGLDLLKI</variation>
    <location>
        <begin position="1"/>
        <end position="40"/>
    </location>
</feature>
<feature type="splice variant" id="VSP_000630" description="In isoform 2f and isoform 2g." evidence="14 17">
    <original>AIDIDATGLDAEENDIPANHRSPKPSANSVTSPHSKEKRMPFFKK</original>
    <variation>AKQKQKS</variation>
    <location>
        <begin position="224"/>
        <end position="268"/>
    </location>
</feature>
<feature type="splice variant" id="VSP_000631" description="In isoform 2h, isoform 2cN2 and isoform 2cN4." evidence="13 14">
    <original>AIDIDATGLDAEENDIPANHRSPKPSANSVTSPHSKEKRMPFFKK</original>
    <variation>GAKSADEQDQWKTAGLFWRFT</variation>
    <location>
        <begin position="224"/>
        <end position="268"/>
    </location>
</feature>
<feature type="sequence variant" id="VAR_036350" description="In a colorectal cancer sample; somatic mutation; dbSNP:rs745502425." evidence="6">
    <original>A</original>
    <variation>G</variation>
    <location>
        <position position="99"/>
    </location>
</feature>
<feature type="sequence variant" id="VAR_044041" description="In BRGDA4; uncertain significance; affects channel activity; dbSNP:rs121917812." evidence="7">
    <original>S</original>
    <variation>L</variation>
    <location>
        <position position="535"/>
    </location>
</feature>
<feature type="mutagenesis site" description="Reduces binding to RRAD; when associated with A-374 and A-376." evidence="11">
    <original>D</original>
    <variation>A</variation>
    <location>
        <position position="298"/>
    </location>
</feature>
<feature type="mutagenesis site" description="Reduces binding to RRAD; when associated with A-298 and A-376." evidence="11">
    <original>D</original>
    <variation>A</variation>
    <location>
        <position position="374"/>
    </location>
</feature>
<feature type="mutagenesis site" description="Reduces binding to RRAD; when associated with A-298 and A-374." evidence="11">
    <original>D</original>
    <variation>A</variation>
    <location>
        <position position="376"/>
    </location>
</feature>
<feature type="sequence conflict" description="In Ref. 4; AAQ97608." evidence="18" ref="4">
    <original>D</original>
    <variation>N</variation>
    <location>
        <position position="56"/>
    </location>
</feature>
<feature type="sequence conflict" description="In Ref. 5; AAD33729." evidence="18" ref="5">
    <original>V</original>
    <variation>L</variation>
    <location>
        <position position="69"/>
    </location>
</feature>
<feature type="sequence conflict" description="In Ref. 5; AAD33729." evidence="18" ref="5">
    <original>ER</original>
    <variation>Q</variation>
    <location>
        <begin position="100"/>
        <end position="101"/>
    </location>
</feature>
<feature type="sequence conflict" description="In Ref. 5; AAD33729." evidence="18" ref="5">
    <original>N</original>
    <variation>D</variation>
    <location>
        <position position="122"/>
    </location>
</feature>
<feature type="sequence conflict" description="In Ref. 5; AAD33729/AAD33730." evidence="18" ref="5">
    <original>L</original>
    <variation>V</variation>
    <location>
        <position position="364"/>
    </location>
</feature>
<feature type="sequence conflict" description="In Ref. 5; AAD33729/AAD33730." evidence="18" ref="5">
    <original>R</original>
    <variation>T</variation>
    <location>
        <position position="406"/>
    </location>
</feature>
<feature type="sequence conflict" description="In Ref. 5; AAD33729/AAD33730." evidence="18" ref="5">
    <original>D</original>
    <variation>H</variation>
    <location>
        <position position="501"/>
    </location>
</feature>
<feature type="sequence conflict" description="In Ref. 5; AAD33729/AAD33730." evidence="18" ref="5">
    <original>P</original>
    <variation>G</variation>
    <location>
        <position position="524"/>
    </location>
</feature>
<feature type="sequence conflict" description="In Ref. 5; AAD33729/AAD33730." evidence="18" ref="5">
    <original>Q</original>
    <variation>QQ</variation>
    <location>
        <position position="624"/>
    </location>
</feature>
<feature type="sequence conflict" description="In Ref. 2; AAB53332, 3; AAG01473/AAL16948/AAL16951/AAL16950, 4; AAQ97606/AAQ97607/AAQ97608/AAQ97609/AAQ97610 and 6; AAL73495." evidence="18" ref="2 3 4 6">
    <original>R</original>
    <variation>P</variation>
    <location>
        <position position="659"/>
    </location>
</feature>
<feature type="strand" evidence="19">
    <location>
        <begin position="284"/>
        <end position="286"/>
    </location>
</feature>
<feature type="helix" evidence="19">
    <location>
        <begin position="295"/>
        <end position="310"/>
    </location>
</feature>
<feature type="turn" evidence="19">
    <location>
        <begin position="313"/>
        <end position="315"/>
    </location>
</feature>
<feature type="helix" evidence="19">
    <location>
        <begin position="352"/>
        <end position="365"/>
    </location>
</feature>
<feature type="helix" evidence="19">
    <location>
        <begin position="381"/>
        <end position="385"/>
    </location>
</feature>
<feature type="strand" evidence="19">
    <location>
        <begin position="392"/>
        <end position="394"/>
    </location>
</feature>
<feature type="helix" evidence="19">
    <location>
        <begin position="401"/>
        <end position="411"/>
    </location>
</feature>
<feature type="turn" evidence="19">
    <location>
        <begin position="414"/>
        <end position="418"/>
    </location>
</feature>
<feature type="helix" evidence="19">
    <location>
        <begin position="419"/>
        <end position="428"/>
    </location>
</feature>
<feature type="helix" evidence="19">
    <location>
        <begin position="434"/>
        <end position="436"/>
    </location>
</feature>
<feature type="strand" evidence="19">
    <location>
        <begin position="443"/>
        <end position="445"/>
    </location>
</feature>
<feature type="helix" evidence="19">
    <location>
        <begin position="446"/>
        <end position="456"/>
    </location>
</feature>
<feature type="turn" evidence="19">
    <location>
        <begin position="457"/>
        <end position="460"/>
    </location>
</feature>
<sequence>MVQRDMSKSPPTAAAAVAQEIQMELLENVAPAGALGAAAQSYGKGARRKNRFKGSDGSTSSDTTSNSFVRQGSADSYTSRPSDSDVSLEEDREAVRREAERQAQAQLEKAKTKPVAFAVRTNVSYSAAHEDDVPVPGMAISFEAKDFLHVKEKFNNDWWIGRLVKEGCEIGFIPSPVKLENMRLQHEQRAKQGKFYSSKSGGNSSSSLGDIVPSSRKSTPPSSAIDIDATGLDAEENDIPANHRSPKPSANSVTSPHSKEKRMPFFKKTEHTPPYDVVPSMRPVVLVGPSLKGYEVTDMMQKALFDFLKHRFEGRISITRVTADISLAKRSVLNNPSKHAIIERSNTRSSLAEVQSEIERIFELARTLQLVVLDADTINHPAQLSKTSLAPIIVYVKISSPKVLQRLIKSRGKSQAKHLNVQMVAADKLAQCPPELFDVILDENQLEDACEHLADYLEAYWKATHPPSSSLPNPLLSRTLATSSLPLSPTLASNSQGSQGDQRTDRSAPIRSASQAEEEPSVEPVKKSQHRSSSSAPHHNHRSGTSRGLSRQETFDSETQESRDSAYVEPKEDYSHDHVDHYASHRDHNHRDETHGSSDHRHRESRHRSRDVDREQDHNECNKQRSRHKSKDRYCEKDGEVISKKRNEAGEWNRDVYIRQ</sequence>
<keyword id="KW-0002">3D-structure</keyword>
<keyword id="KW-0025">Alternative splicing</keyword>
<keyword id="KW-0992">Brugada syndrome</keyword>
<keyword id="KW-0106">Calcium</keyword>
<keyword id="KW-0107">Calcium channel</keyword>
<keyword id="KW-0109">Calcium transport</keyword>
<keyword id="KW-1003">Cell membrane</keyword>
<keyword id="KW-0225">Disease variant</keyword>
<keyword id="KW-0407">Ion channel</keyword>
<keyword id="KW-0406">Ion transport</keyword>
<keyword id="KW-0472">Membrane</keyword>
<keyword id="KW-0597">Phosphoprotein</keyword>
<keyword id="KW-1267">Proteomics identification</keyword>
<keyword id="KW-1185">Reference proteome</keyword>
<keyword id="KW-0728">SH3 domain</keyword>
<keyword id="KW-0813">Transport</keyword>
<keyword id="KW-0851">Voltage-gated channel</keyword>
<reference key="1">
    <citation type="journal article" date="1993" name="Ann. Neurol.">
        <title>Cloning and characterization of a Lambert-Eaton myasthenic syndrome antigen.</title>
        <authorList>
            <person name="Rosenfeld M.R."/>
            <person name="Wong E."/>
            <person name="Dalmau J."/>
            <person name="Manley G."/>
            <person name="Posner J.B."/>
            <person name="Sher E."/>
            <person name="Furneaux H.M."/>
        </authorList>
    </citation>
    <scope>NUCLEOTIDE SEQUENCE [MRNA] (ISOFORMS 2A; 2G AND 2H)</scope>
    <source>
        <tissue>Fetal brain</tissue>
    </source>
</reference>
<reference key="2">
    <citation type="journal article" date="1997" name="Hum. Genet.">
        <title>Assignment of human genes for beta 2 and beta 4 subunits of voltage-dependent Ca2+ channels to chromosomes 10p12 and 2q22-q23.</title>
        <authorList>
            <person name="Taviaux S."/>
            <person name="Williams M.E."/>
            <person name="Harpold M.M."/>
            <person name="Nargeot J."/>
            <person name="Lory P."/>
        </authorList>
    </citation>
    <scope>NUCLEOTIDE SEQUENCE [MRNA] (ISOFORM 2A)</scope>
    <source>
        <tissue>Brain</tissue>
    </source>
</reference>
<reference key="3">
    <citation type="journal article" date="2002" name="J. Physiol. (Lond.)">
        <title>Novel functional properties of Ca(2+) channel beta subunits revealed by their expression in adult rat heart cells.</title>
        <authorList>
            <person name="Colecraft H.M."/>
            <person name="Alseikhan B."/>
            <person name="Takahashi S.X."/>
            <person name="Chaudhuri D."/>
            <person name="Mittman S."/>
            <person name="Yegnasubramanian V."/>
            <person name="Alvania R.S."/>
            <person name="Johns D.C."/>
            <person name="Marban E."/>
            <person name="Yue D.T."/>
        </authorList>
    </citation>
    <scope>NUCLEOTIDE SEQUENCE [MRNA] (ISOFORMS 2A; 2B; 2C; 2D AND 2E)</scope>
</reference>
<reference key="4">
    <citation type="journal article" date="2004" name="Physiol. Genomics">
        <title>Molecular heterogeneity of calcium channel beta-subunits in canine and human heart: evidence for differential subcellular localization.</title>
        <authorList>
            <person name="Foell J.D."/>
            <person name="Balijepalli R.C."/>
            <person name="Delisle B.P."/>
            <person name="Yunker A.M.R."/>
            <person name="Robia S.L."/>
            <person name="Walker J.W."/>
            <person name="McEnery M.W."/>
            <person name="January C.T."/>
            <person name="Kamp T.J."/>
        </authorList>
    </citation>
    <scope>NUCLEOTIDE SEQUENCE [MRNA] (ISOFORMS 2B; 2C; 2H; 2CN2 AND 2CN4)</scope>
    <scope>ALTERNATIVE SPLICING</scope>
    <scope>SUBCELLULAR LOCATION</scope>
    <source>
        <tissue>Heart</tissue>
    </source>
</reference>
<reference key="5">
    <citation type="submission" date="1999-03" db="EMBL/GenBank/DDBJ databases">
        <title>Cooperative effects of alpha2delta and beta2a subunits on surface expression of calcium channel alpha1c subunits.</title>
        <authorList>
            <person name="Mikala G."/>
            <person name="Yamaguchi H."/>
            <person name="Schwartz A."/>
        </authorList>
    </citation>
    <scope>NUCLEOTIDE SEQUENCE [MRNA] (ISOFORMS 2A AND 2D)</scope>
</reference>
<reference key="6">
    <citation type="submission" date="2001-02" db="EMBL/GenBank/DDBJ databases">
        <title>The beta 2 subunit of the voltage-dependent calcium channel (CACNB2): genomic structure and mutational analysis as a candidate gene for ARVD6.</title>
        <authorList>
            <person name="Li D."/>
            <person name="Roberts R."/>
        </authorList>
    </citation>
    <scope>NUCLEOTIDE SEQUENCE [GENOMIC DNA] (ISOFORM 2A)</scope>
</reference>
<reference key="7">
    <citation type="submission" date="2002-01" db="EMBL/GenBank/DDBJ databases">
        <title>Human jejunum voltage-gated calcium channel subunits.</title>
        <authorList>
            <person name="Lyford G.L."/>
            <person name="Strege P."/>
            <person name="Shepard A."/>
            <person name="Miller S."/>
            <person name="Rae J."/>
            <person name="Gibbons S."/>
            <person name="Szurszewski J."/>
            <person name="Farrugia G."/>
        </authorList>
    </citation>
    <scope>NUCLEOTIDE SEQUENCE [MRNA] (ISOFORM 2F)</scope>
    <source>
        <tissue>Jejunum</tissue>
    </source>
</reference>
<reference key="8">
    <citation type="journal article" date="2004" name="Nature">
        <title>The DNA sequence and comparative analysis of human chromosome 10.</title>
        <authorList>
            <person name="Deloukas P."/>
            <person name="Earthrowl M.E."/>
            <person name="Grafham D.V."/>
            <person name="Rubenfield M."/>
            <person name="French L."/>
            <person name="Steward C.A."/>
            <person name="Sims S.K."/>
            <person name="Jones M.C."/>
            <person name="Searle S."/>
            <person name="Scott C."/>
            <person name="Howe K."/>
            <person name="Hunt S.E."/>
            <person name="Andrews T.D."/>
            <person name="Gilbert J.G.R."/>
            <person name="Swarbreck D."/>
            <person name="Ashurst J.L."/>
            <person name="Taylor A."/>
            <person name="Battles J."/>
            <person name="Bird C.P."/>
            <person name="Ainscough R."/>
            <person name="Almeida J.P."/>
            <person name="Ashwell R.I.S."/>
            <person name="Ambrose K.D."/>
            <person name="Babbage A.K."/>
            <person name="Bagguley C.L."/>
            <person name="Bailey J."/>
            <person name="Banerjee R."/>
            <person name="Bates K."/>
            <person name="Beasley H."/>
            <person name="Bray-Allen S."/>
            <person name="Brown A.J."/>
            <person name="Brown J.Y."/>
            <person name="Burford D.C."/>
            <person name="Burrill W."/>
            <person name="Burton J."/>
            <person name="Cahill P."/>
            <person name="Camire D."/>
            <person name="Carter N.P."/>
            <person name="Chapman J.C."/>
            <person name="Clark S.Y."/>
            <person name="Clarke G."/>
            <person name="Clee C.M."/>
            <person name="Clegg S."/>
            <person name="Corby N."/>
            <person name="Coulson A."/>
            <person name="Dhami P."/>
            <person name="Dutta I."/>
            <person name="Dunn M."/>
            <person name="Faulkner L."/>
            <person name="Frankish A."/>
            <person name="Frankland J.A."/>
            <person name="Garner P."/>
            <person name="Garnett J."/>
            <person name="Gribble S."/>
            <person name="Griffiths C."/>
            <person name="Grocock R."/>
            <person name="Gustafson E."/>
            <person name="Hammond S."/>
            <person name="Harley J.L."/>
            <person name="Hart E."/>
            <person name="Heath P.D."/>
            <person name="Ho T.P."/>
            <person name="Hopkins B."/>
            <person name="Horne J."/>
            <person name="Howden P.J."/>
            <person name="Huckle E."/>
            <person name="Hynds C."/>
            <person name="Johnson C."/>
            <person name="Johnson D."/>
            <person name="Kana A."/>
            <person name="Kay M."/>
            <person name="Kimberley A.M."/>
            <person name="Kershaw J.K."/>
            <person name="Kokkinaki M."/>
            <person name="Laird G.K."/>
            <person name="Lawlor S."/>
            <person name="Lee H.M."/>
            <person name="Leongamornlert D.A."/>
            <person name="Laird G."/>
            <person name="Lloyd C."/>
            <person name="Lloyd D.M."/>
            <person name="Loveland J."/>
            <person name="Lovell J."/>
            <person name="McLaren S."/>
            <person name="McLay K.E."/>
            <person name="McMurray A."/>
            <person name="Mashreghi-Mohammadi M."/>
            <person name="Matthews L."/>
            <person name="Milne S."/>
            <person name="Nickerson T."/>
            <person name="Nguyen M."/>
            <person name="Overton-Larty E."/>
            <person name="Palmer S.A."/>
            <person name="Pearce A.V."/>
            <person name="Peck A.I."/>
            <person name="Pelan S."/>
            <person name="Phillimore B."/>
            <person name="Porter K."/>
            <person name="Rice C.M."/>
            <person name="Rogosin A."/>
            <person name="Ross M.T."/>
            <person name="Sarafidou T."/>
            <person name="Sehra H.K."/>
            <person name="Shownkeen R."/>
            <person name="Skuce C.D."/>
            <person name="Smith M."/>
            <person name="Standring L."/>
            <person name="Sycamore N."/>
            <person name="Tester J."/>
            <person name="Thorpe A."/>
            <person name="Torcasso W."/>
            <person name="Tracey A."/>
            <person name="Tromans A."/>
            <person name="Tsolas J."/>
            <person name="Wall M."/>
            <person name="Walsh J."/>
            <person name="Wang H."/>
            <person name="Weinstock K."/>
            <person name="West A.P."/>
            <person name="Willey D.L."/>
            <person name="Whitehead S.L."/>
            <person name="Wilming L."/>
            <person name="Wray P.W."/>
            <person name="Young L."/>
            <person name="Chen Y."/>
            <person name="Lovering R.C."/>
            <person name="Moschonas N.K."/>
            <person name="Siebert R."/>
            <person name="Fechtel K."/>
            <person name="Bentley D."/>
            <person name="Durbin R.M."/>
            <person name="Hubbard T."/>
            <person name="Doucette-Stamm L."/>
            <person name="Beck S."/>
            <person name="Smith D.R."/>
            <person name="Rogers J."/>
        </authorList>
    </citation>
    <scope>NUCLEOTIDE SEQUENCE [LARGE SCALE GENOMIC DNA]</scope>
</reference>
<reference key="9">
    <citation type="submission" date="2005-09" db="EMBL/GenBank/DDBJ databases">
        <authorList>
            <person name="Mural R.J."/>
            <person name="Istrail S."/>
            <person name="Sutton G.G."/>
            <person name="Florea L."/>
            <person name="Halpern A.L."/>
            <person name="Mobarry C.M."/>
            <person name="Lippert R."/>
            <person name="Walenz B."/>
            <person name="Shatkay H."/>
            <person name="Dew I."/>
            <person name="Miller J.R."/>
            <person name="Flanigan M.J."/>
            <person name="Edwards N.J."/>
            <person name="Bolanos R."/>
            <person name="Fasulo D."/>
            <person name="Halldorsson B.V."/>
            <person name="Hannenhalli S."/>
            <person name="Turner R."/>
            <person name="Yooseph S."/>
            <person name="Lu F."/>
            <person name="Nusskern D.R."/>
            <person name="Shue B.C."/>
            <person name="Zheng X.H."/>
            <person name="Zhong F."/>
            <person name="Delcher A.L."/>
            <person name="Huson D.H."/>
            <person name="Kravitz S.A."/>
            <person name="Mouchard L."/>
            <person name="Reinert K."/>
            <person name="Remington K.A."/>
            <person name="Clark A.G."/>
            <person name="Waterman M.S."/>
            <person name="Eichler E.E."/>
            <person name="Adams M.D."/>
            <person name="Hunkapiller M.W."/>
            <person name="Myers E.W."/>
            <person name="Venter J.C."/>
        </authorList>
    </citation>
    <scope>NUCLEOTIDE SEQUENCE [LARGE SCALE GENOMIC DNA]</scope>
</reference>
<reference key="10">
    <citation type="journal article" date="2004" name="Genome Res.">
        <title>The status, quality, and expansion of the NIH full-length cDNA project: the Mammalian Gene Collection (MGC).</title>
        <authorList>
            <consortium name="The MGC Project Team"/>
        </authorList>
    </citation>
    <scope>NUCLEOTIDE SEQUENCE [LARGE SCALE MRNA]</scope>
</reference>
<reference key="11">
    <citation type="journal article" date="2007" name="Circ. Res.">
        <title>Dominant negative suppression of Rad leads to QT prolongation and causes ventricular arrhythmias via modulation of L-type Ca2+ channels in the heart.</title>
        <authorList>
            <person name="Yada H."/>
            <person name="Murata M."/>
            <person name="Shimoda K."/>
            <person name="Yuasa S."/>
            <person name="Kawaguchi H."/>
            <person name="Ieda M."/>
            <person name="Adachi T."/>
            <person name="Murata M."/>
            <person name="Ogawa S."/>
            <person name="Fukuda K."/>
        </authorList>
    </citation>
    <scope>INTERACTION WITH RRAD</scope>
</reference>
<reference key="12">
    <citation type="journal article" date="2012" name="Mol. Biol. Cell">
        <title>Identification of IGPR-1 as a novel adhesion molecule involved in angiogenesis.</title>
        <authorList>
            <person name="Rahimi N."/>
            <person name="Rezazadeh K."/>
            <person name="Mahoney J.E."/>
            <person name="Hartsough E."/>
            <person name="Meyer R.D."/>
        </authorList>
    </citation>
    <scope>INTERACTION WITH TMIGD2</scope>
</reference>
<reference key="13">
    <citation type="journal article" date="2017" name="J. Neurosci.">
        <title>Mutation Disrupts Dendritic Morphology and Synaptic Transmission, and Causes ASD-Related Behaviors.</title>
        <authorList>
            <person name="Stephenson J.R."/>
            <person name="Wang X."/>
            <person name="Perfitt T.L."/>
            <person name="Parrish W.P."/>
            <person name="Shonesy B.C."/>
            <person name="Marks C.R."/>
            <person name="Mortlock D.P."/>
            <person name="Nakagawa T."/>
            <person name="Sutcliffe J.S."/>
            <person name="Colbran R.J."/>
        </authorList>
    </citation>
    <scope>INTERACTION WITH CAMK2A</scope>
</reference>
<reference key="14">
    <citation type="journal article" date="2022" name="Nat. Cardiovasc. Res.">
        <title>Rad regulation of CaV1.2 channels controls cardiac fight-or-flight response.</title>
        <authorList>
            <person name="Papa A."/>
            <person name="Zakharov S.I."/>
            <person name="Katchman A.N."/>
            <person name="Kushner J.S."/>
            <person name="Chen B.X."/>
            <person name="Yang L."/>
            <person name="Liu G."/>
            <person name="Jimenez A.S."/>
            <person name="Eisert R.J."/>
            <person name="Bradshaw G.A."/>
            <person name="Dun W."/>
            <person name="Ali S.R."/>
            <person name="Rodriques A."/>
            <person name="Zhou K."/>
            <person name="Topkara V."/>
            <person name="Yang M."/>
            <person name="Morrow J.P."/>
            <person name="Tsai E.J."/>
            <person name="Karlin A."/>
            <person name="Wan E."/>
            <person name="Kalocsay M."/>
            <person name="Pitt G.S."/>
            <person name="Colecraft H.M."/>
            <person name="Ben-Johny M."/>
            <person name="Marx S.O."/>
        </authorList>
    </citation>
    <scope>FUNCTION</scope>
    <scope>INTERACTION WITH RRAD</scope>
    <scope>MUTAGENESIS OF ASP-298; ASP-374 AND ASP-376</scope>
</reference>
<reference key="15">
    <citation type="journal article" date="2006" name="Science">
        <title>The consensus coding sequences of human breast and colorectal cancers.</title>
        <authorList>
            <person name="Sjoeblom T."/>
            <person name="Jones S."/>
            <person name="Wood L.D."/>
            <person name="Parsons D.W."/>
            <person name="Lin J."/>
            <person name="Barber T.D."/>
            <person name="Mandelker D."/>
            <person name="Leary R.J."/>
            <person name="Ptak J."/>
            <person name="Silliman N."/>
            <person name="Szabo S."/>
            <person name="Buckhaults P."/>
            <person name="Farrell C."/>
            <person name="Meeh P."/>
            <person name="Markowitz S.D."/>
            <person name="Willis J."/>
            <person name="Dawson D."/>
            <person name="Willson J.K.V."/>
            <person name="Gazdar A.F."/>
            <person name="Hartigan J."/>
            <person name="Wu L."/>
            <person name="Liu C."/>
            <person name="Parmigiani G."/>
            <person name="Park B.H."/>
            <person name="Bachman K.E."/>
            <person name="Papadopoulos N."/>
            <person name="Vogelstein B."/>
            <person name="Kinzler K.W."/>
            <person name="Velculescu V.E."/>
        </authorList>
    </citation>
    <scope>VARIANT [LARGE SCALE ANALYSIS] GLY-99</scope>
</reference>
<reference key="16">
    <citation type="journal article" date="2007" name="Circulation">
        <title>Loss-of-function mutations in the cardiac calcium channel underlie a new clinical entity characterized by ST-segment elevation, short QT intervals, and sudden cardiac death.</title>
        <authorList>
            <person name="Antzelevitch C."/>
            <person name="Pollevick G.D."/>
            <person name="Cordeiro J.M."/>
            <person name="Casis O."/>
            <person name="Sanguinetti M.C."/>
            <person name="Aizawa Y."/>
            <person name="Guerchicoff A."/>
            <person name="Pfeiffer R."/>
            <person name="Oliva A."/>
            <person name="Wollnik B."/>
            <person name="Gelber P."/>
            <person name="Bonaros E.P. Jr."/>
            <person name="Burashnikov E."/>
            <person name="Wu Y."/>
            <person name="Sargent J.D."/>
            <person name="Schickel S."/>
            <person name="Oberheiden R."/>
            <person name="Bhatia A."/>
            <person name="Hsu L.F."/>
            <person name="Haissaguerre M."/>
            <person name="Schimpf R."/>
            <person name="Borggrefe M."/>
            <person name="Wolpert C."/>
        </authorList>
    </citation>
    <scope>VARIANT BRGDA4 LEU-535</scope>
    <scope>CHARACTERIZATION OF VARIANT BRGDA4 LEU-535</scope>
</reference>
<protein>
    <recommendedName>
        <fullName>Voltage-dependent L-type calcium channel subunit beta-2</fullName>
        <shortName>CAB2</shortName>
    </recommendedName>
    <alternativeName>
        <fullName>Calcium channel voltage-dependent subunit beta 2</fullName>
    </alternativeName>
    <alternativeName>
        <fullName>Lambert-Eaton myasthenic syndrome antigen B</fullName>
        <shortName>MYSB</shortName>
    </alternativeName>
</protein>
<dbReference type="EMBL" id="S60415">
    <property type="protein sequence ID" value="AAB51370.1"/>
    <property type="status" value="ALT_FRAME"/>
    <property type="molecule type" value="mRNA"/>
</dbReference>
<dbReference type="EMBL" id="U95019">
    <property type="protein sequence ID" value="AAB53332.1"/>
    <property type="molecule type" value="mRNA"/>
</dbReference>
<dbReference type="EMBL" id="AF423189">
    <property type="protein sequence ID" value="AAL16948.1"/>
    <property type="molecule type" value="mRNA"/>
</dbReference>
<dbReference type="EMBL" id="AF423190">
    <property type="protein sequence ID" value="AAL16949.1"/>
    <property type="molecule type" value="mRNA"/>
</dbReference>
<dbReference type="EMBL" id="AF423191">
    <property type="protein sequence ID" value="AAL16950.1"/>
    <property type="molecule type" value="mRNA"/>
</dbReference>
<dbReference type="EMBL" id="AF423192">
    <property type="protein sequence ID" value="AAL16951.1"/>
    <property type="molecule type" value="mRNA"/>
</dbReference>
<dbReference type="EMBL" id="AF285239">
    <property type="protein sequence ID" value="AAG01473.2"/>
    <property type="molecule type" value="mRNA"/>
</dbReference>
<dbReference type="EMBL" id="AY393858">
    <property type="protein sequence ID" value="AAQ97606.1"/>
    <property type="molecule type" value="mRNA"/>
</dbReference>
<dbReference type="EMBL" id="AY393859">
    <property type="protein sequence ID" value="AAQ97607.1"/>
    <property type="molecule type" value="mRNA"/>
</dbReference>
<dbReference type="EMBL" id="AY393860">
    <property type="protein sequence ID" value="AAQ97608.1"/>
    <property type="molecule type" value="mRNA"/>
</dbReference>
<dbReference type="EMBL" id="AY393861">
    <property type="protein sequence ID" value="AAQ97609.1"/>
    <property type="molecule type" value="mRNA"/>
</dbReference>
<dbReference type="EMBL" id="AY393862">
    <property type="protein sequence ID" value="AAQ97610.1"/>
    <property type="molecule type" value="mRNA"/>
</dbReference>
<dbReference type="EMBL" id="AF137376">
    <property type="protein sequence ID" value="AAD33729.1"/>
    <property type="molecule type" value="mRNA"/>
</dbReference>
<dbReference type="EMBL" id="AF137377">
    <property type="protein sequence ID" value="AAD33730.1"/>
    <property type="molecule type" value="mRNA"/>
</dbReference>
<dbReference type="EMBL" id="AY027898">
    <property type="protein sequence ID" value="AAK16994.1"/>
    <property type="molecule type" value="Genomic_DNA"/>
</dbReference>
<dbReference type="EMBL" id="AY027893">
    <property type="protein sequence ID" value="AAK16994.1"/>
    <property type="status" value="JOINED"/>
    <property type="molecule type" value="Genomic_DNA"/>
</dbReference>
<dbReference type="EMBL" id="AY027894">
    <property type="protein sequence ID" value="AAK16994.1"/>
    <property type="status" value="JOINED"/>
    <property type="molecule type" value="Genomic_DNA"/>
</dbReference>
<dbReference type="EMBL" id="AY027895">
    <property type="protein sequence ID" value="AAK16994.1"/>
    <property type="status" value="JOINED"/>
    <property type="molecule type" value="Genomic_DNA"/>
</dbReference>
<dbReference type="EMBL" id="AY027896">
    <property type="protein sequence ID" value="AAK16994.1"/>
    <property type="status" value="JOINED"/>
    <property type="molecule type" value="Genomic_DNA"/>
</dbReference>
<dbReference type="EMBL" id="AY027897">
    <property type="protein sequence ID" value="AAK16994.1"/>
    <property type="status" value="JOINED"/>
    <property type="molecule type" value="Genomic_DNA"/>
</dbReference>
<dbReference type="EMBL" id="AF465485">
    <property type="protein sequence ID" value="AAL73495.1"/>
    <property type="molecule type" value="mRNA"/>
</dbReference>
<dbReference type="EMBL" id="AL139814">
    <property type="status" value="NOT_ANNOTATED_CDS"/>
    <property type="molecule type" value="Genomic_DNA"/>
</dbReference>
<dbReference type="EMBL" id="AL360231">
    <property type="status" value="NOT_ANNOTATED_CDS"/>
    <property type="molecule type" value="Genomic_DNA"/>
</dbReference>
<dbReference type="EMBL" id="AL390783">
    <property type="status" value="NOT_ANNOTATED_CDS"/>
    <property type="molecule type" value="Genomic_DNA"/>
</dbReference>
<dbReference type="EMBL" id="AL450364">
    <property type="status" value="NOT_ANNOTATED_CDS"/>
    <property type="molecule type" value="Genomic_DNA"/>
</dbReference>
<dbReference type="EMBL" id="AL450384">
    <property type="status" value="NOT_ANNOTATED_CDS"/>
    <property type="molecule type" value="Genomic_DNA"/>
</dbReference>
<dbReference type="EMBL" id="AL353603">
    <property type="status" value="NOT_ANNOTATED_CDS"/>
    <property type="molecule type" value="Genomic_DNA"/>
</dbReference>
<dbReference type="EMBL" id="CH471072">
    <property type="protein sequence ID" value="EAW86196.1"/>
    <property type="molecule type" value="Genomic_DNA"/>
</dbReference>
<dbReference type="EMBL" id="CH471072">
    <property type="protein sequence ID" value="EAW86197.1"/>
    <property type="molecule type" value="Genomic_DNA"/>
</dbReference>
<dbReference type="EMBL" id="BC136409">
    <property type="protein sequence ID" value="AAI36410.1"/>
    <property type="molecule type" value="mRNA"/>
</dbReference>
<dbReference type="CCDS" id="CCDS41493.1">
    <molecule id="Q08289-9"/>
</dbReference>
<dbReference type="CCDS" id="CCDS41494.1">
    <molecule id="Q08289-3"/>
</dbReference>
<dbReference type="CCDS" id="CCDS7125.1">
    <molecule id="Q08289-1"/>
</dbReference>
<dbReference type="CCDS" id="CCDS7126.1">
    <molecule id="Q08289-8"/>
</dbReference>
<dbReference type="CCDS" id="CCDS7127.1">
    <molecule id="Q08289-4"/>
</dbReference>
<dbReference type="CCDS" id="CCDS7128.1">
    <molecule id="Q08289-2"/>
</dbReference>
<dbReference type="CCDS" id="CCDS7129.1">
    <molecule id="Q08289-5"/>
</dbReference>
<dbReference type="CCDS" id="CCDS81442.1">
    <molecule id="Q08289-6"/>
</dbReference>
<dbReference type="PIR" id="A48895">
    <property type="entry name" value="A48895"/>
</dbReference>
<dbReference type="RefSeq" id="NP_000715.2">
    <molecule id="Q08289-2"/>
    <property type="nucleotide sequence ID" value="NM_000724.4"/>
</dbReference>
<dbReference type="RefSeq" id="NP_001316989.1">
    <molecule id="Q08289-6"/>
    <property type="nucleotide sequence ID" value="NM_001330060.2"/>
</dbReference>
<dbReference type="RefSeq" id="NP_963864.1">
    <molecule id="Q08289-5"/>
    <property type="nucleotide sequence ID" value="NM_201570.3"/>
</dbReference>
<dbReference type="RefSeq" id="NP_963865.2">
    <molecule id="Q08289-4"/>
    <property type="nucleotide sequence ID" value="NM_201571.4"/>
</dbReference>
<dbReference type="RefSeq" id="NP_963866.2">
    <molecule id="Q08289-9"/>
    <property type="nucleotide sequence ID" value="NM_201572.4"/>
</dbReference>
<dbReference type="RefSeq" id="NP_963884.2">
    <molecule id="Q08289-3"/>
    <property type="nucleotide sequence ID" value="NM_201590.3"/>
</dbReference>
<dbReference type="RefSeq" id="NP_963887.2">
    <molecule id="Q08289-7"/>
    <property type="nucleotide sequence ID" value="NM_201593.3"/>
</dbReference>
<dbReference type="RefSeq" id="NP_963890.2">
    <molecule id="Q08289-1"/>
    <property type="nucleotide sequence ID" value="NM_201596.3"/>
</dbReference>
<dbReference type="RefSeq" id="NP_963891.1">
    <molecule id="Q08289-8"/>
    <property type="nucleotide sequence ID" value="NM_201597.3"/>
</dbReference>
<dbReference type="RefSeq" id="XP_011517961.1">
    <molecule id="Q08289-10"/>
    <property type="nucleotide sequence ID" value="XM_011519659.3"/>
</dbReference>
<dbReference type="RefSeq" id="XP_054222679.1">
    <molecule id="Q08289-10"/>
    <property type="nucleotide sequence ID" value="XM_054366704.1"/>
</dbReference>
<dbReference type="PDB" id="8HLP">
    <property type="method" value="EM"/>
    <property type="resolution" value="3.50 A"/>
    <property type="chains" value="C=41-660"/>
</dbReference>
<dbReference type="PDB" id="8HMA">
    <property type="method" value="EM"/>
    <property type="resolution" value="3.40 A"/>
    <property type="chains" value="H=41-660"/>
</dbReference>
<dbReference type="PDB" id="8HMB">
    <property type="method" value="EM"/>
    <property type="resolution" value="3.30 A"/>
    <property type="chains" value="C=41-660"/>
</dbReference>
<dbReference type="PDBsum" id="8HLP"/>
<dbReference type="PDBsum" id="8HMA"/>
<dbReference type="PDBsum" id="8HMB"/>
<dbReference type="EMDB" id="EMD-34880"/>
<dbReference type="EMDB" id="EMD-34891"/>
<dbReference type="EMDB" id="EMD-34892"/>
<dbReference type="SMR" id="Q08289"/>
<dbReference type="BioGRID" id="107237">
    <property type="interactions" value="10"/>
</dbReference>
<dbReference type="ComplexPortal" id="CPX-3195">
    <property type="entry name" value="Cav1.2 voltage-gated calcium channel complex, CACNA2D1-CACNB2 variant"/>
</dbReference>
<dbReference type="ComplexPortal" id="CPX-8699">
    <property type="entry name" value="Cav1.1 voltage-gated calcium channel complex, CACNA2D1-CACNB2-CACNG1 variant"/>
</dbReference>
<dbReference type="ComplexPortal" id="CPX-8741">
    <property type="entry name" value="Cav1.1 voltage-gated calcium channel complex, CACNA2D2-CACNB2-CACNG1 variant"/>
</dbReference>
<dbReference type="ComplexPortal" id="CPX-8763">
    <property type="entry name" value="Cav1.1 voltage-gated calcium channel complex, CACNA2D3-CACNB2-CACNG1 variant"/>
</dbReference>
<dbReference type="ComplexPortal" id="CPX-8771">
    <property type="entry name" value="Cav1.1 voltage-gated calcium channel complex, CACNA2D4-CACNB2-CACNG1 variant"/>
</dbReference>
<dbReference type="ComplexPortal" id="CPX-8864">
    <property type="entry name" value="Cav1.2 voltage-gated calcium channel complex, CACNA2D2-CACNB2 variant"/>
</dbReference>
<dbReference type="ComplexPortal" id="CPX-8869">
    <property type="entry name" value="Cav1.2 voltage-gated calcium channel complex, CACNA2D3-CACNB2 variant"/>
</dbReference>
<dbReference type="ComplexPortal" id="CPX-8873">
    <property type="entry name" value="Cav1.2 voltage-gated calcium channel complex, CACNA2D4-CACNB2 variant"/>
</dbReference>
<dbReference type="FunCoup" id="Q08289">
    <property type="interactions" value="1216"/>
</dbReference>
<dbReference type="IntAct" id="Q08289">
    <property type="interactions" value="9"/>
</dbReference>
<dbReference type="MINT" id="Q08289"/>
<dbReference type="STRING" id="9606.ENSP00000320025"/>
<dbReference type="BindingDB" id="Q08289"/>
<dbReference type="ChEMBL" id="CHEMBL3317336"/>
<dbReference type="DrugBank" id="DB01118">
    <property type="generic name" value="Amiodarone"/>
</dbReference>
<dbReference type="DrugBank" id="DB09231">
    <property type="generic name" value="Benidipine"/>
</dbReference>
<dbReference type="DrugBank" id="DB13746">
    <property type="generic name" value="Bioallethrin"/>
</dbReference>
<dbReference type="DrugBank" id="DB11148">
    <property type="generic name" value="Butamben"/>
</dbReference>
<dbReference type="DrugBank" id="DB11093">
    <property type="generic name" value="Calcium citrate"/>
</dbReference>
<dbReference type="DrugBank" id="DB11348">
    <property type="generic name" value="Calcium Phosphate"/>
</dbReference>
<dbReference type="DrugBank" id="DB14481">
    <property type="generic name" value="Calcium phosphate dihydrate"/>
</dbReference>
<dbReference type="DrugBank" id="DB09232">
    <property type="generic name" value="Cilnidipine"/>
</dbReference>
<dbReference type="DrugBank" id="DB04855">
    <property type="generic name" value="Dronedarone"/>
</dbReference>
<dbReference type="DrugBank" id="DB06751">
    <property type="generic name" value="Drotaverine"/>
</dbReference>
<dbReference type="DrugBank" id="DB09235">
    <property type="generic name" value="Efonidipine"/>
</dbReference>
<dbReference type="DrugBank" id="DB00228">
    <property type="generic name" value="Enflurane"/>
</dbReference>
<dbReference type="DrugBank" id="DB00153">
    <property type="generic name" value="Ergocalciferol"/>
</dbReference>
<dbReference type="DrugBank" id="DB01023">
    <property type="generic name" value="Felodipine"/>
</dbReference>
<dbReference type="DrugBank" id="DB13961">
    <property type="generic name" value="Fish oil"/>
</dbReference>
<dbReference type="DrugBank" id="DB00270">
    <property type="generic name" value="Isradipine"/>
</dbReference>
<dbReference type="DrugBank" id="DB09236">
    <property type="generic name" value="Lacidipine"/>
</dbReference>
<dbReference type="DrugBank" id="DB00825">
    <property type="generic name" value="Levomenthol"/>
</dbReference>
<dbReference type="DrugBank" id="DB00653">
    <property type="generic name" value="Magnesium sulfate"/>
</dbReference>
<dbReference type="DrugBank" id="DB09238">
    <property type="generic name" value="Manidipine"/>
</dbReference>
<dbReference type="DrugBank" id="DB01388">
    <property type="generic name" value="Mibefradil"/>
</dbReference>
<dbReference type="DrugBank" id="DB01110">
    <property type="generic name" value="Miconazole"/>
</dbReference>
<dbReference type="DrugBank" id="DB00622">
    <property type="generic name" value="Nicardipine"/>
</dbReference>
<dbReference type="DrugBank" id="DB01115">
    <property type="generic name" value="Nifedipine"/>
</dbReference>
<dbReference type="DrugBank" id="DB06712">
    <property type="generic name" value="Nilvadipine"/>
</dbReference>
<dbReference type="DrugBank" id="DB00393">
    <property type="generic name" value="Nimodipine"/>
</dbReference>
<dbReference type="DrugBank" id="DB00401">
    <property type="generic name" value="Nisoldipine"/>
</dbReference>
<dbReference type="DrugBank" id="DB01054">
    <property type="generic name" value="Nitrendipine"/>
</dbReference>
<dbReference type="DrugBank" id="DB00252">
    <property type="generic name" value="Phenytoin"/>
</dbReference>
<dbReference type="DrugBank" id="DB00243">
    <property type="generic name" value="Ranolazine"/>
</dbReference>
<dbReference type="DrugBank" id="DB00421">
    <property type="generic name" value="Spironolactone"/>
</dbReference>
<dbReference type="DrugBank" id="DB00273">
    <property type="generic name" value="Topiramate"/>
</dbReference>
<dbReference type="DrugBank" id="DB09089">
    <property type="generic name" value="Trimebutine"/>
</dbReference>
<dbReference type="DrugBank" id="DB00661">
    <property type="generic name" value="Verapamil"/>
</dbReference>
<dbReference type="TCDB" id="8.A.22.1.2">
    <property type="family name" value="the ca(2+) channel auxiliary subunit Beta types 1-4 (cca-Beta) family"/>
</dbReference>
<dbReference type="GlyGen" id="Q08289">
    <property type="glycosylation" value="2 sites, 1 O-linked glycan (2 sites)"/>
</dbReference>
<dbReference type="iPTMnet" id="Q08289"/>
<dbReference type="PhosphoSitePlus" id="Q08289"/>
<dbReference type="BioMuta" id="CACNB2"/>
<dbReference type="DMDM" id="145559447"/>
<dbReference type="jPOST" id="Q08289"/>
<dbReference type="MassIVE" id="Q08289"/>
<dbReference type="PaxDb" id="9606-ENSP00000320025"/>
<dbReference type="PeptideAtlas" id="Q08289"/>
<dbReference type="ProteomicsDB" id="1694"/>
<dbReference type="ProteomicsDB" id="58586">
    <molecule id="Q08289-1"/>
</dbReference>
<dbReference type="ProteomicsDB" id="58587">
    <molecule id="Q08289-2"/>
</dbReference>
<dbReference type="ProteomicsDB" id="58588">
    <molecule id="Q08289-3"/>
</dbReference>
<dbReference type="ProteomicsDB" id="58589">
    <molecule id="Q08289-4"/>
</dbReference>
<dbReference type="ProteomicsDB" id="58590">
    <molecule id="Q08289-5"/>
</dbReference>
<dbReference type="ProteomicsDB" id="58591">
    <molecule id="Q08289-6"/>
</dbReference>
<dbReference type="ProteomicsDB" id="58592">
    <molecule id="Q08289-7"/>
</dbReference>
<dbReference type="ProteomicsDB" id="58593">
    <molecule id="Q08289-8"/>
</dbReference>
<dbReference type="ABCD" id="Q08289">
    <property type="antibodies" value="1 sequenced antibody"/>
</dbReference>
<dbReference type="Antibodypedia" id="12067">
    <property type="antibodies" value="569 antibodies from 34 providers"/>
</dbReference>
<dbReference type="DNASU" id="783"/>
<dbReference type="Ensembl" id="ENST00000282343.13">
    <molecule id="Q08289-4"/>
    <property type="protein sequence ID" value="ENSP00000282343.8"/>
    <property type="gene ID" value="ENSG00000165995.24"/>
</dbReference>
<dbReference type="Ensembl" id="ENST00000324631.13">
    <molecule id="Q08289-1"/>
    <property type="protein sequence ID" value="ENSP00000320025.8"/>
    <property type="gene ID" value="ENSG00000165995.24"/>
</dbReference>
<dbReference type="Ensembl" id="ENST00000352115.10">
    <molecule id="Q08289-8"/>
    <property type="protein sequence ID" value="ENSP00000344474.6"/>
    <property type="gene ID" value="ENSG00000165995.24"/>
</dbReference>
<dbReference type="Ensembl" id="ENST00000377315.6">
    <molecule id="Q08289-5"/>
    <property type="protein sequence ID" value="ENSP00000366532.4"/>
    <property type="gene ID" value="ENSG00000165995.24"/>
</dbReference>
<dbReference type="Ensembl" id="ENST00000377319.9">
    <molecule id="Q08289-6"/>
    <property type="protein sequence ID" value="ENSP00000366536.3"/>
    <property type="gene ID" value="ENSG00000165995.24"/>
</dbReference>
<dbReference type="Ensembl" id="ENST00000377329.10">
    <molecule id="Q08289-3"/>
    <property type="protein sequence ID" value="ENSP00000366546.4"/>
    <property type="gene ID" value="ENSG00000165995.24"/>
</dbReference>
<dbReference type="Ensembl" id="ENST00000396576.6">
    <molecule id="Q08289-2"/>
    <property type="protein sequence ID" value="ENSP00000379821.2"/>
    <property type="gene ID" value="ENSG00000165995.24"/>
</dbReference>
<dbReference type="Ensembl" id="ENST00000645287.2">
    <molecule id="Q08289-9"/>
    <property type="protein sequence ID" value="ENSP00000496203.1"/>
    <property type="gene ID" value="ENSG00000165995.24"/>
</dbReference>
<dbReference type="GeneID" id="783"/>
<dbReference type="KEGG" id="hsa:783"/>
<dbReference type="MANE-Select" id="ENST00000324631.13">
    <property type="protein sequence ID" value="ENSP00000320025.8"/>
    <property type="RefSeq nucleotide sequence ID" value="NM_201596.3"/>
    <property type="RefSeq protein sequence ID" value="NP_963890.2"/>
</dbReference>
<dbReference type="UCSC" id="uc001ipr.3">
    <molecule id="Q08289-1"/>
    <property type="organism name" value="human"/>
</dbReference>
<dbReference type="AGR" id="HGNC:1402"/>
<dbReference type="CTD" id="783"/>
<dbReference type="DisGeNET" id="783"/>
<dbReference type="GeneCards" id="CACNB2"/>
<dbReference type="GeneReviews" id="CACNB2"/>
<dbReference type="HGNC" id="HGNC:1402">
    <property type="gene designation" value="CACNB2"/>
</dbReference>
<dbReference type="HPA" id="ENSG00000165995">
    <property type="expression patterns" value="Low tissue specificity"/>
</dbReference>
<dbReference type="MalaCards" id="CACNB2"/>
<dbReference type="MIM" id="600003">
    <property type="type" value="gene"/>
</dbReference>
<dbReference type="MIM" id="611876">
    <property type="type" value="phenotype"/>
</dbReference>
<dbReference type="neXtProt" id="NX_Q08289"/>
<dbReference type="OpenTargets" id="ENSG00000165995"/>
<dbReference type="Orphanet" id="130">
    <property type="disease" value="Brugada syndrome"/>
</dbReference>
<dbReference type="PharmGKB" id="PA88"/>
<dbReference type="VEuPathDB" id="HostDB:ENSG00000165995"/>
<dbReference type="eggNOG" id="KOG3812">
    <property type="taxonomic scope" value="Eukaryota"/>
</dbReference>
<dbReference type="GeneTree" id="ENSGT00950000182837"/>
<dbReference type="HOGENOM" id="CLU_021995_3_0_1"/>
<dbReference type="InParanoid" id="Q08289"/>
<dbReference type="OMA" id="DSNFSHH"/>
<dbReference type="OrthoDB" id="5962384at2759"/>
<dbReference type="PAN-GO" id="Q08289">
    <property type="GO annotations" value="4 GO annotations based on evolutionary models"/>
</dbReference>
<dbReference type="PhylomeDB" id="Q08289"/>
<dbReference type="TreeFam" id="TF316195"/>
<dbReference type="PathwayCommons" id="Q08289"/>
<dbReference type="Reactome" id="R-HSA-112308">
    <property type="pathway name" value="Presynaptic depolarization and calcium channel opening"/>
</dbReference>
<dbReference type="Reactome" id="R-HSA-400042">
    <property type="pathway name" value="Adrenaline,noradrenaline inhibits insulin secretion"/>
</dbReference>
<dbReference type="Reactome" id="R-HSA-419037">
    <property type="pathway name" value="NCAM1 interactions"/>
</dbReference>
<dbReference type="Reactome" id="R-HSA-422356">
    <property type="pathway name" value="Regulation of insulin secretion"/>
</dbReference>
<dbReference type="Reactome" id="R-HSA-5576892">
    <property type="pathway name" value="Phase 0 - rapid depolarisation"/>
</dbReference>
<dbReference type="Reactome" id="R-HSA-5576893">
    <property type="pathway name" value="Phase 2 - plateau phase"/>
</dbReference>
<dbReference type="Reactome" id="R-HSA-9662360">
    <property type="pathway name" value="Sensory processing of sound by inner hair cells of the cochlea"/>
</dbReference>
<dbReference type="Reactome" id="R-HSA-9856532">
    <property type="pathway name" value="Mechanical load activates signaling by PIEZO1 and integrins in osteocytes"/>
</dbReference>
<dbReference type="SignaLink" id="Q08289"/>
<dbReference type="SIGNOR" id="Q08289"/>
<dbReference type="BioGRID-ORCS" id="783">
    <property type="hits" value="10 hits in 1156 CRISPR screens"/>
</dbReference>
<dbReference type="ChiTaRS" id="CACNB2">
    <property type="organism name" value="human"/>
</dbReference>
<dbReference type="GeneWiki" id="CACNB2"/>
<dbReference type="GenomeRNAi" id="783"/>
<dbReference type="Pharos" id="Q08289">
    <property type="development level" value="Tbio"/>
</dbReference>
<dbReference type="PRO" id="PR:Q08289"/>
<dbReference type="Proteomes" id="UP000005640">
    <property type="component" value="Chromosome 10"/>
</dbReference>
<dbReference type="RNAct" id="Q08289">
    <property type="molecule type" value="protein"/>
</dbReference>
<dbReference type="Bgee" id="ENSG00000165995">
    <property type="expression patterns" value="Expressed in adrenal tissue and 159 other cell types or tissues"/>
</dbReference>
<dbReference type="ExpressionAtlas" id="Q08289">
    <property type="expression patterns" value="baseline and differential"/>
</dbReference>
<dbReference type="GO" id="GO:1990454">
    <property type="term" value="C:L-type voltage-gated calcium channel complex"/>
    <property type="evidence" value="ECO:0000314"/>
    <property type="project" value="BHF-UCL"/>
</dbReference>
<dbReference type="GO" id="GO:0098684">
    <property type="term" value="C:photoreceptor ribbon synapse"/>
    <property type="evidence" value="ECO:0007669"/>
    <property type="project" value="Ensembl"/>
</dbReference>
<dbReference type="GO" id="GO:0005886">
    <property type="term" value="C:plasma membrane"/>
    <property type="evidence" value="ECO:0000304"/>
    <property type="project" value="Reactome"/>
</dbReference>
<dbReference type="GO" id="GO:0098793">
    <property type="term" value="C:presynapse"/>
    <property type="evidence" value="ECO:0007669"/>
    <property type="project" value="GOC"/>
</dbReference>
<dbReference type="GO" id="GO:0005891">
    <property type="term" value="C:voltage-gated calcium channel complex"/>
    <property type="evidence" value="ECO:0000314"/>
    <property type="project" value="BHF-UCL"/>
</dbReference>
<dbReference type="GO" id="GO:0051015">
    <property type="term" value="F:actin filament binding"/>
    <property type="evidence" value="ECO:0000250"/>
    <property type="project" value="BHF-UCL"/>
</dbReference>
<dbReference type="GO" id="GO:0005262">
    <property type="term" value="F:calcium channel activity"/>
    <property type="evidence" value="ECO:0000303"/>
    <property type="project" value="UniProtKB"/>
</dbReference>
<dbReference type="GO" id="GO:0005245">
    <property type="term" value="F:voltage-gated calcium channel activity"/>
    <property type="evidence" value="ECO:0000314"/>
    <property type="project" value="BHF-UCL"/>
</dbReference>
<dbReference type="GO" id="GO:0099626">
    <property type="term" value="F:voltage-gated calcium channel activity involved in regulation of presynaptic cytosolic calcium levels"/>
    <property type="evidence" value="ECO:0007669"/>
    <property type="project" value="Ensembl"/>
</dbReference>
<dbReference type="GO" id="GO:0070509">
    <property type="term" value="P:calcium ion import"/>
    <property type="evidence" value="ECO:0000314"/>
    <property type="project" value="BHF-UCL"/>
</dbReference>
<dbReference type="GO" id="GO:0070588">
    <property type="term" value="P:calcium ion transmembrane transport"/>
    <property type="evidence" value="ECO:0000250"/>
    <property type="project" value="ComplexPortal"/>
</dbReference>
<dbReference type="GO" id="GO:0006816">
    <property type="term" value="P:calcium ion transport"/>
    <property type="evidence" value="ECO:0000318"/>
    <property type="project" value="GO_Central"/>
</dbReference>
<dbReference type="GO" id="GO:0007268">
    <property type="term" value="P:chemical synaptic transmission"/>
    <property type="evidence" value="ECO:0000318"/>
    <property type="project" value="GO_Central"/>
</dbReference>
<dbReference type="GO" id="GO:0098912">
    <property type="term" value="P:membrane depolarization during atrial cardiac muscle cell action potential"/>
    <property type="evidence" value="ECO:0000315"/>
    <property type="project" value="BHF-UCL"/>
</dbReference>
<dbReference type="GO" id="GO:0086045">
    <property type="term" value="P:membrane depolarization during AV node cell action potential"/>
    <property type="evidence" value="ECO:0000315"/>
    <property type="project" value="BHF-UCL"/>
</dbReference>
<dbReference type="GO" id="GO:0007528">
    <property type="term" value="P:neuromuscular junction development"/>
    <property type="evidence" value="ECO:0000304"/>
    <property type="project" value="ProtInc"/>
</dbReference>
<dbReference type="GO" id="GO:1904879">
    <property type="term" value="P:positive regulation of calcium ion transmembrane transport via high voltage-gated calcium channel"/>
    <property type="evidence" value="ECO:0000250"/>
    <property type="project" value="BHF-UCL"/>
</dbReference>
<dbReference type="GO" id="GO:0051928">
    <property type="term" value="P:positive regulation of calcium ion transport"/>
    <property type="evidence" value="ECO:0000314"/>
    <property type="project" value="BHF-UCL"/>
</dbReference>
<dbReference type="GO" id="GO:0045933">
    <property type="term" value="P:positive regulation of muscle contraction"/>
    <property type="evidence" value="ECO:0000303"/>
    <property type="project" value="ComplexPortal"/>
</dbReference>
<dbReference type="GO" id="GO:0072659">
    <property type="term" value="P:protein localization to plasma membrane"/>
    <property type="evidence" value="ECO:0000250"/>
    <property type="project" value="BHF-UCL"/>
</dbReference>
<dbReference type="GO" id="GO:0086091">
    <property type="term" value="P:regulation of heart rate by cardiac conduction"/>
    <property type="evidence" value="ECO:0000315"/>
    <property type="project" value="BHF-UCL"/>
</dbReference>
<dbReference type="GO" id="GO:0007601">
    <property type="term" value="P:visual perception"/>
    <property type="evidence" value="ECO:0007669"/>
    <property type="project" value="Ensembl"/>
</dbReference>
<dbReference type="CDD" id="cd12040">
    <property type="entry name" value="SH3_CACNB2"/>
    <property type="match status" value="1"/>
</dbReference>
<dbReference type="FunFam" id="2.30.30.40:FF:000015">
    <property type="entry name" value="Voltage-dependent L-type calcium channel subunit beta-2"/>
    <property type="match status" value="1"/>
</dbReference>
<dbReference type="FunFam" id="3.40.50.300:FF:000023">
    <property type="entry name" value="Voltage-dependent L-type calcium channel subunit beta-2"/>
    <property type="match status" value="1"/>
</dbReference>
<dbReference type="Gene3D" id="3.40.50.300">
    <property type="entry name" value="P-loop containing nucleotide triphosphate hydrolases"/>
    <property type="match status" value="1"/>
</dbReference>
<dbReference type="Gene3D" id="2.30.30.40">
    <property type="entry name" value="SH3 Domains"/>
    <property type="match status" value="1"/>
</dbReference>
<dbReference type="InterPro" id="IPR046937">
    <property type="entry name" value="CAB1-4_N_A-dom"/>
</dbReference>
<dbReference type="InterPro" id="IPR035605">
    <property type="entry name" value="CACNB2_SH3"/>
</dbReference>
<dbReference type="InterPro" id="IPR008145">
    <property type="entry name" value="GK/Ca_channel_bsu"/>
</dbReference>
<dbReference type="InterPro" id="IPR027417">
    <property type="entry name" value="P-loop_NTPase"/>
</dbReference>
<dbReference type="InterPro" id="IPR036028">
    <property type="entry name" value="SH3-like_dom_sf"/>
</dbReference>
<dbReference type="InterPro" id="IPR001452">
    <property type="entry name" value="SH3_domain"/>
</dbReference>
<dbReference type="InterPro" id="IPR005444">
    <property type="entry name" value="VDCC_L_b2su"/>
</dbReference>
<dbReference type="InterPro" id="IPR000584">
    <property type="entry name" value="VDCC_L_bsu"/>
</dbReference>
<dbReference type="PANTHER" id="PTHR11824">
    <property type="entry name" value="VOLTAGE-DEPENDENT CALCIUM CHANNEL BETA SUBUNIT"/>
    <property type="match status" value="1"/>
</dbReference>
<dbReference type="Pfam" id="PF00625">
    <property type="entry name" value="Guanylate_kin"/>
    <property type="match status" value="1"/>
</dbReference>
<dbReference type="Pfam" id="PF12052">
    <property type="entry name" value="VGCC_beta4Aa_N"/>
    <property type="match status" value="1"/>
</dbReference>
<dbReference type="PRINTS" id="PR01626">
    <property type="entry name" value="LCACHANNELB"/>
</dbReference>
<dbReference type="PRINTS" id="PR01628">
    <property type="entry name" value="LCACHANNELB2"/>
</dbReference>
<dbReference type="SMART" id="SM00072">
    <property type="entry name" value="GuKc"/>
    <property type="match status" value="1"/>
</dbReference>
<dbReference type="SMART" id="SM00326">
    <property type="entry name" value="SH3"/>
    <property type="match status" value="1"/>
</dbReference>
<dbReference type="SUPFAM" id="SSF52540">
    <property type="entry name" value="P-loop containing nucleoside triphosphate hydrolases"/>
    <property type="match status" value="1"/>
</dbReference>
<dbReference type="SUPFAM" id="SSF50044">
    <property type="entry name" value="SH3-domain"/>
    <property type="match status" value="1"/>
</dbReference>
<dbReference type="PROSITE" id="PS50002">
    <property type="entry name" value="SH3"/>
    <property type="match status" value="1"/>
</dbReference>
<name>CACB2_HUMAN</name>
<evidence type="ECO:0000250" key="1"/>
<evidence type="ECO:0000250" key="2">
    <source>
        <dbReference type="UniProtKB" id="Q8CC27"/>
    </source>
</evidence>
<evidence type="ECO:0000250" key="3">
    <source>
        <dbReference type="UniProtKB" id="Q8VGC3"/>
    </source>
</evidence>
<evidence type="ECO:0000255" key="4">
    <source>
        <dbReference type="PROSITE-ProRule" id="PRU00192"/>
    </source>
</evidence>
<evidence type="ECO:0000256" key="5">
    <source>
        <dbReference type="SAM" id="MobiDB-lite"/>
    </source>
</evidence>
<evidence type="ECO:0000269" key="6">
    <source>
    </source>
</evidence>
<evidence type="ECO:0000269" key="7">
    <source>
    </source>
</evidence>
<evidence type="ECO:0000269" key="8">
    <source>
    </source>
</evidence>
<evidence type="ECO:0000269" key="9">
    <source>
    </source>
</evidence>
<evidence type="ECO:0000269" key="10">
    <source>
    </source>
</evidence>
<evidence type="ECO:0000269" key="11">
    <source>
    </source>
</evidence>
<evidence type="ECO:0000303" key="12">
    <source>
    </source>
</evidence>
<evidence type="ECO:0000303" key="13">
    <source>
    </source>
</evidence>
<evidence type="ECO:0000303" key="14">
    <source>
    </source>
</evidence>
<evidence type="ECO:0000303" key="15">
    <source>
    </source>
</evidence>
<evidence type="ECO:0000303" key="16">
    <source ref="5"/>
</evidence>
<evidence type="ECO:0000303" key="17">
    <source ref="7"/>
</evidence>
<evidence type="ECO:0000305" key="18"/>
<evidence type="ECO:0007829" key="19">
    <source>
        <dbReference type="PDB" id="8HLP"/>
    </source>
</evidence>
<gene>
    <name type="primary">CACNB2</name>
    <name type="synonym">CACNLB2</name>
    <name type="synonym">MYSB</name>
</gene>
<proteinExistence type="evidence at protein level"/>
<organism>
    <name type="scientific">Homo sapiens</name>
    <name type="common">Human</name>
    <dbReference type="NCBI Taxonomy" id="9606"/>
    <lineage>
        <taxon>Eukaryota</taxon>
        <taxon>Metazoa</taxon>
        <taxon>Chordata</taxon>
        <taxon>Craniata</taxon>
        <taxon>Vertebrata</taxon>
        <taxon>Euteleostomi</taxon>
        <taxon>Mammalia</taxon>
        <taxon>Eutheria</taxon>
        <taxon>Euarchontoglires</taxon>
        <taxon>Primates</taxon>
        <taxon>Haplorrhini</taxon>
        <taxon>Catarrhini</taxon>
        <taxon>Hominidae</taxon>
        <taxon>Homo</taxon>
    </lineage>
</organism>
<accession>Q08289</accession>
<accession>A6PVM5</accession>
<accession>A6PVM7</accession>
<accession>A6PVM8</accession>
<accession>O00304</accession>
<accession>Q5QJ99</accession>
<accession>Q5QJA0</accession>
<accession>Q5VVG9</accession>
<accession>Q5VVH0</accession>
<accession>Q5VWV6</accession>
<accession>Q6TME1</accession>
<accession>Q6TME2</accession>
<accession>Q6TME3</accession>
<accession>Q8WX81</accession>
<accession>Q96NZ3</accession>
<accession>Q96NZ4</accession>
<accession>Q96NZ5</accession>
<accession>Q9BWU2</accession>
<accession>Q9HD32</accession>
<accession>Q9Y340</accession>
<accession>Q9Y341</accession>